<proteinExistence type="inferred from homology"/>
<dbReference type="EC" id="6.1.1.16" evidence="1"/>
<dbReference type="EMBL" id="AM260525">
    <property type="protein sequence ID" value="CAK01211.1"/>
    <property type="molecule type" value="Genomic_DNA"/>
</dbReference>
<dbReference type="SMR" id="A9IRQ9"/>
<dbReference type="KEGG" id="btr:BT_0800"/>
<dbReference type="eggNOG" id="COG0215">
    <property type="taxonomic scope" value="Bacteria"/>
</dbReference>
<dbReference type="HOGENOM" id="CLU_013528_0_1_5"/>
<dbReference type="Proteomes" id="UP000001592">
    <property type="component" value="Chromosome"/>
</dbReference>
<dbReference type="GO" id="GO:0005829">
    <property type="term" value="C:cytosol"/>
    <property type="evidence" value="ECO:0007669"/>
    <property type="project" value="TreeGrafter"/>
</dbReference>
<dbReference type="GO" id="GO:0005524">
    <property type="term" value="F:ATP binding"/>
    <property type="evidence" value="ECO:0007669"/>
    <property type="project" value="UniProtKB-UniRule"/>
</dbReference>
<dbReference type="GO" id="GO:0004817">
    <property type="term" value="F:cysteine-tRNA ligase activity"/>
    <property type="evidence" value="ECO:0007669"/>
    <property type="project" value="UniProtKB-UniRule"/>
</dbReference>
<dbReference type="GO" id="GO:0008270">
    <property type="term" value="F:zinc ion binding"/>
    <property type="evidence" value="ECO:0007669"/>
    <property type="project" value="UniProtKB-UniRule"/>
</dbReference>
<dbReference type="GO" id="GO:0006423">
    <property type="term" value="P:cysteinyl-tRNA aminoacylation"/>
    <property type="evidence" value="ECO:0007669"/>
    <property type="project" value="UniProtKB-UniRule"/>
</dbReference>
<dbReference type="CDD" id="cd00672">
    <property type="entry name" value="CysRS_core"/>
    <property type="match status" value="1"/>
</dbReference>
<dbReference type="Gene3D" id="1.20.120.1910">
    <property type="entry name" value="Cysteine-tRNA ligase, C-terminal anti-codon recognition domain"/>
    <property type="match status" value="1"/>
</dbReference>
<dbReference type="Gene3D" id="3.40.50.620">
    <property type="entry name" value="HUPs"/>
    <property type="match status" value="1"/>
</dbReference>
<dbReference type="HAMAP" id="MF_00041">
    <property type="entry name" value="Cys_tRNA_synth"/>
    <property type="match status" value="1"/>
</dbReference>
<dbReference type="InterPro" id="IPR015803">
    <property type="entry name" value="Cys-tRNA-ligase"/>
</dbReference>
<dbReference type="InterPro" id="IPR024909">
    <property type="entry name" value="Cys-tRNA/MSH_ligase"/>
</dbReference>
<dbReference type="InterPro" id="IPR014729">
    <property type="entry name" value="Rossmann-like_a/b/a_fold"/>
</dbReference>
<dbReference type="InterPro" id="IPR032678">
    <property type="entry name" value="tRNA-synt_1_cat_dom"/>
</dbReference>
<dbReference type="InterPro" id="IPR009080">
    <property type="entry name" value="tRNAsynth_Ia_anticodon-bd"/>
</dbReference>
<dbReference type="NCBIfam" id="TIGR00435">
    <property type="entry name" value="cysS"/>
    <property type="match status" value="1"/>
</dbReference>
<dbReference type="PANTHER" id="PTHR10890:SF3">
    <property type="entry name" value="CYSTEINE--TRNA LIGASE, CYTOPLASMIC"/>
    <property type="match status" value="1"/>
</dbReference>
<dbReference type="PANTHER" id="PTHR10890">
    <property type="entry name" value="CYSTEINYL-TRNA SYNTHETASE"/>
    <property type="match status" value="1"/>
</dbReference>
<dbReference type="Pfam" id="PF01406">
    <property type="entry name" value="tRNA-synt_1e"/>
    <property type="match status" value="1"/>
</dbReference>
<dbReference type="PRINTS" id="PR00983">
    <property type="entry name" value="TRNASYNTHCYS"/>
</dbReference>
<dbReference type="SUPFAM" id="SSF47323">
    <property type="entry name" value="Anticodon-binding domain of a subclass of class I aminoacyl-tRNA synthetases"/>
    <property type="match status" value="1"/>
</dbReference>
<dbReference type="SUPFAM" id="SSF52374">
    <property type="entry name" value="Nucleotidylyl transferase"/>
    <property type="match status" value="1"/>
</dbReference>
<protein>
    <recommendedName>
        <fullName evidence="1">Cysteine--tRNA ligase</fullName>
        <ecNumber evidence="1">6.1.1.16</ecNumber>
    </recommendedName>
    <alternativeName>
        <fullName evidence="1">Cysteinyl-tRNA synthetase</fullName>
        <shortName evidence="1">CysRS</shortName>
    </alternativeName>
</protein>
<gene>
    <name evidence="1" type="primary">cysS</name>
    <name type="ordered locus">BT_0800</name>
</gene>
<name>SYC_BART1</name>
<accession>A9IRQ9</accession>
<organism>
    <name type="scientific">Bartonella tribocorum (strain CIP 105476 / IBS 506)</name>
    <dbReference type="NCBI Taxonomy" id="382640"/>
    <lineage>
        <taxon>Bacteria</taxon>
        <taxon>Pseudomonadati</taxon>
        <taxon>Pseudomonadota</taxon>
        <taxon>Alphaproteobacteria</taxon>
        <taxon>Hyphomicrobiales</taxon>
        <taxon>Bartonellaceae</taxon>
        <taxon>Bartonella</taxon>
    </lineage>
</organism>
<feature type="chain" id="PRO_0000332793" description="Cysteine--tRNA ligase">
    <location>
        <begin position="1"/>
        <end position="503"/>
    </location>
</feature>
<feature type="short sequence motif" description="'HIGH' region">
    <location>
        <begin position="33"/>
        <end position="43"/>
    </location>
</feature>
<feature type="short sequence motif" description="'KMSKS' region">
    <location>
        <begin position="297"/>
        <end position="301"/>
    </location>
</feature>
<feature type="binding site" evidence="1">
    <location>
        <position position="31"/>
    </location>
    <ligand>
        <name>Zn(2+)</name>
        <dbReference type="ChEBI" id="CHEBI:29105"/>
    </ligand>
</feature>
<feature type="binding site" evidence="1">
    <location>
        <position position="225"/>
    </location>
    <ligand>
        <name>Zn(2+)</name>
        <dbReference type="ChEBI" id="CHEBI:29105"/>
    </ligand>
</feature>
<feature type="binding site" evidence="1">
    <location>
        <position position="264"/>
    </location>
    <ligand>
        <name>Zn(2+)</name>
        <dbReference type="ChEBI" id="CHEBI:29105"/>
    </ligand>
</feature>
<feature type="binding site" evidence="1">
    <location>
        <position position="268"/>
    </location>
    <ligand>
        <name>Zn(2+)</name>
        <dbReference type="ChEBI" id="CHEBI:29105"/>
    </ligand>
</feature>
<feature type="binding site" evidence="1">
    <location>
        <position position="300"/>
    </location>
    <ligand>
        <name>ATP</name>
        <dbReference type="ChEBI" id="CHEBI:30616"/>
    </ligand>
</feature>
<keyword id="KW-0030">Aminoacyl-tRNA synthetase</keyword>
<keyword id="KW-0067">ATP-binding</keyword>
<keyword id="KW-0963">Cytoplasm</keyword>
<keyword id="KW-0436">Ligase</keyword>
<keyword id="KW-0479">Metal-binding</keyword>
<keyword id="KW-0547">Nucleotide-binding</keyword>
<keyword id="KW-0648">Protein biosynthesis</keyword>
<keyword id="KW-0862">Zinc</keyword>
<sequence length="503" mass="57561">MMKELRFYNTLTRKKENFIPIDPTKVRLYVCGPTVYDYAHIGNARPLIVFDILFRLLRHVYGSDHVLYARNITDVDDKINARAACEYPNLPLNEAIRQLTERTYFQFQQDTIALGCLLPTSQPRATEHLEEMRALIERLLEKGHAYKAENHILFSISSIKNPPHYGAFANRSLDEMRAGARIDVAAYKREEMDFVLWKPSAEGEPGWKSPGGIPVLGRPGWHIECSAMSMAKLLAPYGGGLTCDDPIANIFDIHGGGLDLIFPHHENEIAQSCSAFGTERMANFWMHNGFLQVEGKKMSKSFGNFITIRSVLENNFLEFNGALAYEIKQNWAGLSARFSMLQTHYREPLNWTAQRLMQSSSELYRWYELLRDKKSMMENNEAIEDTLIDALSDDLNTPKAFTLLRKFYKAGDALALANGMNLLGLLRQEWIKEIDCPLFIKKTSLDSKFIEQCIAERLRLIHNKEWGAADKIRNELAAEGILLKDGKDPQSGKRITVWEIKRF</sequence>
<evidence type="ECO:0000255" key="1">
    <source>
        <dbReference type="HAMAP-Rule" id="MF_00041"/>
    </source>
</evidence>
<reference key="1">
    <citation type="journal article" date="2007" name="Nat. Genet.">
        <title>Genomic analysis of Bartonella identifies type IV secretion systems as host adaptability factors.</title>
        <authorList>
            <person name="Saenz H.L."/>
            <person name="Engel P."/>
            <person name="Stoeckli M.C."/>
            <person name="Lanz C."/>
            <person name="Raddatz G."/>
            <person name="Vayssier-Taussat M."/>
            <person name="Birtles R."/>
            <person name="Schuster S.C."/>
            <person name="Dehio C."/>
        </authorList>
    </citation>
    <scope>NUCLEOTIDE SEQUENCE [LARGE SCALE GENOMIC DNA]</scope>
    <source>
        <strain>CIP 105476 / IBS 506</strain>
    </source>
</reference>
<comment type="catalytic activity">
    <reaction evidence="1">
        <text>tRNA(Cys) + L-cysteine + ATP = L-cysteinyl-tRNA(Cys) + AMP + diphosphate</text>
        <dbReference type="Rhea" id="RHEA:17773"/>
        <dbReference type="Rhea" id="RHEA-COMP:9661"/>
        <dbReference type="Rhea" id="RHEA-COMP:9679"/>
        <dbReference type="ChEBI" id="CHEBI:30616"/>
        <dbReference type="ChEBI" id="CHEBI:33019"/>
        <dbReference type="ChEBI" id="CHEBI:35235"/>
        <dbReference type="ChEBI" id="CHEBI:78442"/>
        <dbReference type="ChEBI" id="CHEBI:78517"/>
        <dbReference type="ChEBI" id="CHEBI:456215"/>
        <dbReference type="EC" id="6.1.1.16"/>
    </reaction>
</comment>
<comment type="cofactor">
    <cofactor evidence="1">
        <name>Zn(2+)</name>
        <dbReference type="ChEBI" id="CHEBI:29105"/>
    </cofactor>
    <text evidence="1">Binds 1 zinc ion per subunit.</text>
</comment>
<comment type="subunit">
    <text evidence="1">Monomer.</text>
</comment>
<comment type="subcellular location">
    <subcellularLocation>
        <location evidence="1">Cytoplasm</location>
    </subcellularLocation>
</comment>
<comment type="similarity">
    <text evidence="1">Belongs to the class-I aminoacyl-tRNA synthetase family.</text>
</comment>